<accession>Q5XX06</accession>
<proteinExistence type="evidence at protein level"/>
<feature type="chain" id="PRO_0000245082" description="Matrix protein VP40">
    <location>
        <begin position="1"/>
        <end position="326"/>
    </location>
</feature>
<feature type="region of interest" description="Important for oligomerization" evidence="1">
    <location>
        <begin position="212"/>
        <end position="214"/>
    </location>
</feature>
<feature type="region of interest" description="Membrane-binding" evidence="1">
    <location>
        <begin position="213"/>
        <end position="326"/>
    </location>
</feature>
<feature type="short sequence motif" description="PTAP/PSAP motif">
    <location>
        <begin position="7"/>
        <end position="10"/>
    </location>
</feature>
<feature type="short sequence motif" description="PPXY motif">
    <location>
        <begin position="10"/>
        <end position="13"/>
    </location>
</feature>
<feature type="helix" evidence="6">
    <location>
        <begin position="61"/>
        <end position="63"/>
    </location>
</feature>
<feature type="strand" evidence="6">
    <location>
        <begin position="71"/>
        <end position="76"/>
    </location>
</feature>
<feature type="strand" evidence="6">
    <location>
        <begin position="78"/>
        <end position="83"/>
    </location>
</feature>
<feature type="strand" evidence="6">
    <location>
        <begin position="86"/>
        <end position="92"/>
    </location>
</feature>
<feature type="strand" evidence="6">
    <location>
        <begin position="96"/>
        <end position="101"/>
    </location>
</feature>
<feature type="strand" evidence="6">
    <location>
        <begin position="103"/>
        <end position="106"/>
    </location>
</feature>
<feature type="helix" evidence="6">
    <location>
        <begin position="108"/>
        <end position="116"/>
    </location>
</feature>
<feature type="strand" evidence="6">
    <location>
        <begin position="118"/>
        <end position="125"/>
    </location>
</feature>
<feature type="strand" evidence="6">
    <location>
        <begin position="128"/>
        <end position="130"/>
    </location>
</feature>
<feature type="strand" evidence="6">
    <location>
        <begin position="132"/>
        <end position="139"/>
    </location>
</feature>
<feature type="helix" evidence="6">
    <location>
        <begin position="148"/>
        <end position="152"/>
    </location>
</feature>
<feature type="strand" evidence="6">
    <location>
        <begin position="153"/>
        <end position="158"/>
    </location>
</feature>
<feature type="helix" evidence="6">
    <location>
        <begin position="159"/>
        <end position="162"/>
    </location>
</feature>
<feature type="strand" evidence="6">
    <location>
        <begin position="173"/>
        <end position="185"/>
    </location>
</feature>
<feature type="strand" evidence="6">
    <location>
        <begin position="203"/>
        <end position="210"/>
    </location>
</feature>
<feature type="helix" evidence="6">
    <location>
        <begin position="234"/>
        <end position="243"/>
    </location>
</feature>
<feature type="helix" evidence="6">
    <location>
        <begin position="244"/>
        <end position="246"/>
    </location>
</feature>
<feature type="strand" evidence="6">
    <location>
        <begin position="248"/>
        <end position="253"/>
    </location>
</feature>
<feature type="helix" evidence="6">
    <location>
        <begin position="254"/>
        <end position="256"/>
    </location>
</feature>
<feature type="strand" evidence="6">
    <location>
        <begin position="258"/>
        <end position="262"/>
    </location>
</feature>
<feature type="helix" evidence="6">
    <location>
        <begin position="265"/>
        <end position="272"/>
    </location>
</feature>
<feature type="strand" evidence="6">
    <location>
        <begin position="284"/>
        <end position="288"/>
    </location>
</feature>
<feature type="helix" evidence="5">
    <location>
        <begin position="291"/>
        <end position="293"/>
    </location>
</feature>
<feature type="helix" evidence="6">
    <location>
        <begin position="300"/>
        <end position="302"/>
    </location>
</feature>
<feature type="strand" evidence="6">
    <location>
        <begin position="304"/>
        <end position="309"/>
    </location>
</feature>
<feature type="turn" evidence="6">
    <location>
        <begin position="317"/>
        <end position="320"/>
    </location>
</feature>
<organism>
    <name type="scientific">Sudan ebolavirus (strain Human/Uganda/Gulu/2000)</name>
    <name type="common">SEBOV</name>
    <name type="synonym">Sudan Ebola virus</name>
    <dbReference type="NCBI Taxonomy" id="386033"/>
    <lineage>
        <taxon>Viruses</taxon>
        <taxon>Riboviria</taxon>
        <taxon>Orthornavirae</taxon>
        <taxon>Negarnaviricota</taxon>
        <taxon>Haploviricotina</taxon>
        <taxon>Monjiviricetes</taxon>
        <taxon>Mononegavirales</taxon>
        <taxon>Filoviridae</taxon>
        <taxon>Orthoebolavirus</taxon>
        <taxon>Orthoebolavirus sudanense</taxon>
        <taxon>Sudan ebolavirus</taxon>
    </lineage>
</organism>
<organismHost>
    <name type="scientific">Epomops franqueti</name>
    <name type="common">Franquet's epauletted fruit bat</name>
    <name type="synonym">Epomophorus franqueti</name>
    <dbReference type="NCBI Taxonomy" id="77231"/>
</organismHost>
<organismHost>
    <name type="scientific">Homo sapiens</name>
    <name type="common">Human</name>
    <dbReference type="NCBI Taxonomy" id="9606"/>
</organismHost>
<organismHost>
    <name type="scientific">Myonycteris torquata</name>
    <name type="common">Little collared fruit bat</name>
    <dbReference type="NCBI Taxonomy" id="77243"/>
</organismHost>
<protein>
    <recommendedName>
        <fullName>Matrix protein VP40</fullName>
    </recommendedName>
    <alternativeName>
        <fullName evidence="3">Ebola VP40</fullName>
        <shortName evidence="3">eVP40</shortName>
    </alternativeName>
    <alternativeName>
        <fullName>Membrane-associated protein VP40</fullName>
    </alternativeName>
</protein>
<comment type="function">
    <text evidence="3">Plays an essential role virus particle assembly and budding. Acts by interacting with viral ribonucleocapsid and host members of the ESCRT (endosomal sorting complex required for transport) system such as host VPS4, PDCD6IP/ALIX, NEDD4 or TGS101. The interaction with host E3 ubiquitin ligase SMURF2 also facilitates virus budding. May play a role in immune cell dysfunction by being packaged into exosomes that can decrease the viability of recipient cells (via RNAi suppression and exosome-bystander apoptosis).</text>
</comment>
<comment type="subunit">
    <text evidence="3">Homodimer. Homohexamer. Homooctamer. Exists as a dimer until it reorganizes at the plasma membrane into a hexameric form using phosphatidylinositol 4,5-bisphosphate (PI(4,5)P2). Hexamers are critical for budding. Octamers function in genome replication and RNA binding. Interacts with host TSG101. As a homohexamer, interacts with the WW domain 3 of host NEDD4. Interacts with the nucleoprotein/NP. Interacts (via YPx(n)L/I motif) with host PDCD6IP/ALIX; this interaction supports efficient egress of viral particles. Interacts with VP35. Interacts with host ITCH; this interaction is required for efficient egress. Interacts (via PPXY motif) with host SMURF2 (via WW domains); the interaction positively regulates virus budding.</text>
</comment>
<comment type="interaction">
    <interactant intactId="EBI-38773572">
        <id>Q5XX06</id>
    </interactant>
    <interactant intactId="EBI-1564678">
        <id>Q96J02</id>
        <label>ITCH</label>
    </interactant>
    <organismsDiffer>true</organismsDiffer>
    <experiments>2</experiments>
</comment>
<comment type="interaction">
    <interactant intactId="EBI-38773572">
        <id>Q5XX06</id>
    </interactant>
    <interactant intactId="EBI-726944">
        <id>P46934</id>
        <label>NEDD4</label>
    </interactant>
    <organismsDiffer>true</organismsDiffer>
    <experiments>3</experiments>
</comment>
<comment type="subcellular location">
    <subcellularLocation>
        <location evidence="2">Virion membrane</location>
        <topology evidence="2">Peripheral membrane protein</topology>
    </subcellularLocation>
    <subcellularLocation>
        <location evidence="2">Host late endosome membrane</location>
        <topology evidence="2">Peripheral membrane protein</topology>
    </subcellularLocation>
    <subcellularLocation>
        <location evidence="2">Host cell membrane</location>
        <topology evidence="2">Peripheral membrane protein</topology>
        <orientation evidence="2">Cytoplasmic side</orientation>
    </subcellularLocation>
    <subcellularLocation>
        <location evidence="2">Host endomembrane system</location>
        <topology evidence="2">Peripheral membrane protein</topology>
    </subcellularLocation>
    <text evidence="2">In virion, localizes on the intravirional side of the membrane. In the host cell, it is found associated with virus-induced membrane proliferation foci and probably also in multivesicular bodies. These VP40-enriched membrane clusters are then redistributed to the plasma membrane where budding takes place.</text>
</comment>
<comment type="domain">
    <text evidence="3">Late-budding domains (L domains) are short sequence motifs essential for viral particle budding. They recruit proteins of the host ESCRT machinery (Endosomal Sorting Complex Required for Transport) or ESCRT-associated proteins. VP40 contains two overlapping L domains: a PTAP/PSAP motif, which interacts with the UEV domain of TSG101 and a PPXY motif which interacts with the WW domain 3 of NEDD4 E3 ubiquitin ligase and the three WW domains of SMURF2 E3 ubiquitin ligase.</text>
</comment>
<comment type="miscellaneous">
    <text evidence="1">Most abundant protein in the virion.</text>
</comment>
<comment type="similarity">
    <text evidence="4">Belongs to the filoviridae matrix protein VP40 family.</text>
</comment>
<keyword id="KW-0002">3D-structure</keyword>
<keyword id="KW-1032">Host cell membrane</keyword>
<keyword id="KW-1039">Host endosome</keyword>
<keyword id="KW-1043">Host membrane</keyword>
<keyword id="KW-0945">Host-virus interaction</keyword>
<keyword id="KW-1090">Inhibition of host innate immune response by virus</keyword>
<keyword id="KW-0472">Membrane</keyword>
<keyword id="KW-0687">Ribonucleoprotein</keyword>
<keyword id="KW-0694">RNA-binding</keyword>
<keyword id="KW-0941">Suppressor of RNA silencing</keyword>
<keyword id="KW-1198">Viral budding</keyword>
<keyword id="KW-1187">Viral budding via the host ESCRT complexes</keyword>
<keyword id="KW-0899">Viral immunoevasion</keyword>
<keyword id="KW-0468">Viral matrix protein</keyword>
<keyword id="KW-1188">Viral release from host cell</keyword>
<keyword id="KW-0693">Viral RNA replication</keyword>
<keyword id="KW-0946">Virion</keyword>
<name>VP40_EBOSU</name>
<sequence length="326" mass="35475">MRRVTVPTAPPAYADIGYPMSMLPIKSSRAVSGIQQKQEVLPGMDTPSNSMRPVADDNIDHTSHTPNGVASAFILEATVNVISGPKVLMKQIPIWLPLGIADQKTYSFDSTTAAIMLASYTITHFGKANNPLVRVNRLGQGIPDHPLRLLRMGNQAFLQEFVLPPVQLPQYFTFDLTALKLVTQPLPAATWTDETPSNLSGALRPGLSFHPKLRPVLLPGKTGKKGHVSDLTAPDKIQTIVNLMQDFKIVPIDPAKSIIGIEVPELLVHKLTGKKMSQKNGQPIIPVLLPKYIGLDPISPGDLTMVITPDYDDCHSPASCSYLSEK</sequence>
<reference key="1">
    <citation type="journal article" date="2005" name="Virus Res.">
        <title>Complete genome sequence of an Ebola virus (Sudan species) responsible for a 2000 outbreak of human disease in Uganda.</title>
        <authorList>
            <person name="Sanchez A."/>
            <person name="Rollin P.E."/>
        </authorList>
    </citation>
    <scope>NUCLEOTIDE SEQUENCE [GENOMIC RNA]</scope>
</reference>
<evidence type="ECO:0000250" key="1"/>
<evidence type="ECO:0000250" key="2">
    <source>
        <dbReference type="UniProtKB" id="P35260"/>
    </source>
</evidence>
<evidence type="ECO:0000250" key="3">
    <source>
        <dbReference type="UniProtKB" id="Q05128"/>
    </source>
</evidence>
<evidence type="ECO:0000305" key="4"/>
<evidence type="ECO:0007829" key="5">
    <source>
        <dbReference type="PDB" id="4LD8"/>
    </source>
</evidence>
<evidence type="ECO:0007829" key="6">
    <source>
        <dbReference type="PDB" id="8B3X"/>
    </source>
</evidence>
<gene>
    <name type="primary">VP40</name>
</gene>
<dbReference type="EMBL" id="AY729654">
    <property type="protein sequence ID" value="AAU43885.1"/>
    <property type="molecule type" value="Genomic_RNA"/>
</dbReference>
<dbReference type="RefSeq" id="YP_138522.1">
    <property type="nucleotide sequence ID" value="NC_006432.1"/>
</dbReference>
<dbReference type="PDB" id="4LD8">
    <property type="method" value="X-ray"/>
    <property type="resolution" value="1.83 A"/>
    <property type="chains" value="A=44-326"/>
</dbReference>
<dbReference type="PDB" id="8AYT">
    <property type="method" value="X-ray"/>
    <property type="resolution" value="1.90 A"/>
    <property type="chains" value="A=44-326"/>
</dbReference>
<dbReference type="PDB" id="8AYU">
    <property type="method" value="X-ray"/>
    <property type="resolution" value="2.00 A"/>
    <property type="chains" value="A=44-326"/>
</dbReference>
<dbReference type="PDB" id="8B1O">
    <property type="method" value="X-ray"/>
    <property type="resolution" value="1.75 A"/>
    <property type="chains" value="A=44-326"/>
</dbReference>
<dbReference type="PDB" id="8B1P">
    <property type="method" value="X-ray"/>
    <property type="resolution" value="1.70 A"/>
    <property type="chains" value="A=44-326"/>
</dbReference>
<dbReference type="PDB" id="8B1S">
    <property type="method" value="X-ray"/>
    <property type="resolution" value="1.60 A"/>
    <property type="chains" value="A=44-326"/>
</dbReference>
<dbReference type="PDB" id="8B2U">
    <property type="method" value="X-ray"/>
    <property type="resolution" value="1.80 A"/>
    <property type="chains" value="A=44-326"/>
</dbReference>
<dbReference type="PDB" id="8B3X">
    <property type="method" value="X-ray"/>
    <property type="resolution" value="1.53 A"/>
    <property type="chains" value="A=44-326"/>
</dbReference>
<dbReference type="PDBsum" id="4LD8"/>
<dbReference type="PDBsum" id="8AYT"/>
<dbReference type="PDBsum" id="8AYU"/>
<dbReference type="PDBsum" id="8B1O"/>
<dbReference type="PDBsum" id="8B1P"/>
<dbReference type="PDBsum" id="8B1S"/>
<dbReference type="PDBsum" id="8B2U"/>
<dbReference type="PDBsum" id="8B3X"/>
<dbReference type="SMR" id="Q5XX06"/>
<dbReference type="IntAct" id="Q5XX06">
    <property type="interactions" value="9"/>
</dbReference>
<dbReference type="GeneID" id="3160775"/>
<dbReference type="KEGG" id="vg:3160775"/>
<dbReference type="EvolutionaryTrace" id="Q5XX06"/>
<dbReference type="Proteomes" id="UP000000277">
    <property type="component" value="Segment"/>
</dbReference>
<dbReference type="GO" id="GO:0033645">
    <property type="term" value="C:host cell endomembrane system"/>
    <property type="evidence" value="ECO:0007669"/>
    <property type="project" value="UniProtKB-SubCell"/>
</dbReference>
<dbReference type="GO" id="GO:0044185">
    <property type="term" value="C:host cell late endosome membrane"/>
    <property type="evidence" value="ECO:0007669"/>
    <property type="project" value="UniProtKB-SubCell"/>
</dbReference>
<dbReference type="GO" id="GO:0020002">
    <property type="term" value="C:host cell plasma membrane"/>
    <property type="evidence" value="ECO:0007669"/>
    <property type="project" value="UniProtKB-SubCell"/>
</dbReference>
<dbReference type="GO" id="GO:0016020">
    <property type="term" value="C:membrane"/>
    <property type="evidence" value="ECO:0007669"/>
    <property type="project" value="UniProtKB-KW"/>
</dbReference>
<dbReference type="GO" id="GO:1990904">
    <property type="term" value="C:ribonucleoprotein complex"/>
    <property type="evidence" value="ECO:0007669"/>
    <property type="project" value="UniProtKB-KW"/>
</dbReference>
<dbReference type="GO" id="GO:0055036">
    <property type="term" value="C:virion membrane"/>
    <property type="evidence" value="ECO:0007669"/>
    <property type="project" value="UniProtKB-SubCell"/>
</dbReference>
<dbReference type="GO" id="GO:0003723">
    <property type="term" value="F:RNA binding"/>
    <property type="evidence" value="ECO:0007669"/>
    <property type="project" value="UniProtKB-KW"/>
</dbReference>
<dbReference type="GO" id="GO:0039660">
    <property type="term" value="F:structural constituent of virion"/>
    <property type="evidence" value="ECO:0007669"/>
    <property type="project" value="UniProtKB-KW"/>
</dbReference>
<dbReference type="GO" id="GO:0052170">
    <property type="term" value="P:symbiont-mediated suppression of host innate immune response"/>
    <property type="evidence" value="ECO:0007669"/>
    <property type="project" value="UniProtKB-KW"/>
</dbReference>
<dbReference type="GO" id="GO:0039702">
    <property type="term" value="P:viral budding via host ESCRT complex"/>
    <property type="evidence" value="ECO:0007669"/>
    <property type="project" value="UniProtKB-KW"/>
</dbReference>
<dbReference type="Gene3D" id="2.60.510.10">
    <property type="entry name" value="EV matrix protein"/>
    <property type="match status" value="1"/>
</dbReference>
<dbReference type="Gene3D" id="2.70.20.20">
    <property type="entry name" value="Matrix protein VP40, N-terminal domain"/>
    <property type="match status" value="1"/>
</dbReference>
<dbReference type="InterPro" id="IPR008986">
    <property type="entry name" value="EV_matrix"/>
</dbReference>
<dbReference type="InterPro" id="IPR035092">
    <property type="entry name" value="EV_matrix_protein_C"/>
</dbReference>
<dbReference type="InterPro" id="IPR043079">
    <property type="entry name" value="EV_matrix_protein_N"/>
</dbReference>
<dbReference type="InterPro" id="IPR038057">
    <property type="entry name" value="EV_matrix_sf"/>
</dbReference>
<dbReference type="Pfam" id="PF07447">
    <property type="entry name" value="Matrix_Filo"/>
    <property type="match status" value="1"/>
</dbReference>
<dbReference type="PIRSF" id="PIRSF018327">
    <property type="entry name" value="VP40_FiloV"/>
    <property type="match status" value="1"/>
</dbReference>
<dbReference type="SUPFAM" id="SSF50012">
    <property type="entry name" value="EV matrix protein"/>
    <property type="match status" value="2"/>
</dbReference>